<feature type="signal peptide" evidence="1">
    <location>
        <begin position="1"/>
        <end position="20"/>
    </location>
</feature>
<feature type="chain" id="PRO_5004187349" description="Neurexin like receptor 1" evidence="1">
    <location>
        <begin position="21"/>
        <end position="1180"/>
    </location>
</feature>
<feature type="topological domain" description="Extracellular" evidence="8">
    <location>
        <begin position="21"/>
        <end position="1108"/>
    </location>
</feature>
<feature type="transmembrane region" description="Helical" evidence="1">
    <location>
        <begin position="1109"/>
        <end position="1129"/>
    </location>
</feature>
<feature type="topological domain" description="Cytoplasmic" evidence="8">
    <location>
        <begin position="1130"/>
        <end position="1180"/>
    </location>
</feature>
<feature type="domain" description="Laminin G-like 1" evidence="3">
    <location>
        <begin position="124"/>
        <end position="290"/>
    </location>
</feature>
<feature type="domain" description="EGF-like 1" evidence="2">
    <location>
        <begin position="444"/>
        <end position="481"/>
    </location>
</feature>
<feature type="domain" description="Laminin G-like 2" evidence="3">
    <location>
        <begin position="695"/>
        <end position="863"/>
    </location>
</feature>
<feature type="domain" description="EGF-like 2" evidence="2">
    <location>
        <begin position="859"/>
        <end position="896"/>
    </location>
</feature>
<feature type="region of interest" description="Disordered" evidence="5">
    <location>
        <begin position="1142"/>
        <end position="1180"/>
    </location>
</feature>
<feature type="compositionally biased region" description="Polar residues" evidence="5">
    <location>
        <begin position="1142"/>
        <end position="1152"/>
    </location>
</feature>
<feature type="compositionally biased region" description="Low complexity" evidence="5">
    <location>
        <begin position="1161"/>
        <end position="1171"/>
    </location>
</feature>
<feature type="glycosylation site" description="N-linked (GlcNAc...) asparagine" evidence="4">
    <location>
        <position position="229"/>
    </location>
</feature>
<feature type="glycosylation site" description="N-linked (GlcNAc...) asparagine" evidence="4">
    <location>
        <position position="302"/>
    </location>
</feature>
<feature type="glycosylation site" description="N-linked (GlcNAc...) asparagine" evidence="4">
    <location>
        <position position="336"/>
    </location>
</feature>
<feature type="glycosylation site" description="N-linked (GlcNAc...) asparagine" evidence="4">
    <location>
        <position position="355"/>
    </location>
</feature>
<feature type="glycosylation site" description="N-linked (GlcNAc...) asparagine" evidence="4">
    <location>
        <position position="436"/>
    </location>
</feature>
<feature type="glycosylation site" description="N-linked (GlcNAc...) asparagine" evidence="4">
    <location>
        <position position="522"/>
    </location>
</feature>
<feature type="glycosylation site" description="N-linked (GlcNAc...) asparagine" evidence="4">
    <location>
        <position position="636"/>
    </location>
</feature>
<feature type="glycosylation site" description="N-linked (GlcNAc...) asparagine" evidence="4">
    <location>
        <position position="933"/>
    </location>
</feature>
<feature type="glycosylation site" description="N-linked (GlcNAc...) asparagine" evidence="4">
    <location>
        <position position="949"/>
    </location>
</feature>
<feature type="glycosylation site" description="N-linked (GlcNAc...) asparagine" evidence="4">
    <location>
        <position position="978"/>
    </location>
</feature>
<feature type="glycosylation site" description="N-linked (GlcNAc...) asparagine" evidence="4">
    <location>
        <position position="997"/>
    </location>
</feature>
<feature type="glycosylation site" description="N-linked (GlcNAc...) asparagine" evidence="4">
    <location>
        <position position="1011"/>
    </location>
</feature>
<feature type="glycosylation site" description="N-linked (GlcNAc...) asparagine" evidence="4">
    <location>
        <position position="1052"/>
    </location>
</feature>
<feature type="disulfide bond" evidence="3">
    <location>
        <begin position="267"/>
        <end position="290"/>
    </location>
</feature>
<feature type="disulfide bond" evidence="2">
    <location>
        <begin position="448"/>
        <end position="459"/>
    </location>
</feature>
<feature type="disulfide bond" evidence="2">
    <location>
        <begin position="453"/>
        <end position="469"/>
    </location>
</feature>
<feature type="disulfide bond" evidence="2">
    <location>
        <begin position="471"/>
        <end position="480"/>
    </location>
</feature>
<feature type="disulfide bond" evidence="2">
    <location>
        <begin position="863"/>
        <end position="874"/>
    </location>
</feature>
<feature type="disulfide bond" evidence="2">
    <location>
        <begin position="868"/>
        <end position="883"/>
    </location>
</feature>
<feature type="disulfide bond" evidence="2">
    <location>
        <begin position="885"/>
        <end position="895"/>
    </location>
</feature>
<evidence type="ECO:0000255" key="1"/>
<evidence type="ECO:0000255" key="2">
    <source>
        <dbReference type="PROSITE-ProRule" id="PRU00076"/>
    </source>
</evidence>
<evidence type="ECO:0000255" key="3">
    <source>
        <dbReference type="PROSITE-ProRule" id="PRU00122"/>
    </source>
</evidence>
<evidence type="ECO:0000255" key="4">
    <source>
        <dbReference type="PROSITE-ProRule" id="PRU00498"/>
    </source>
</evidence>
<evidence type="ECO:0000256" key="5">
    <source>
        <dbReference type="SAM" id="MobiDB-lite"/>
    </source>
</evidence>
<evidence type="ECO:0000269" key="6">
    <source>
    </source>
</evidence>
<evidence type="ECO:0000269" key="7">
    <source>
    </source>
</evidence>
<evidence type="ECO:0000305" key="8"/>
<evidence type="ECO:0000305" key="9">
    <source>
    </source>
</evidence>
<evidence type="ECO:0000312" key="10">
    <source>
        <dbReference type="Proteomes" id="UP000001940"/>
    </source>
</evidence>
<evidence type="ECO:0000312" key="11">
    <source>
        <dbReference type="WormBase" id="F20B10.1"/>
    </source>
</evidence>
<protein>
    <recommendedName>
        <fullName evidence="11">Neurexin like receptor 1</fullName>
    </recommendedName>
</protein>
<name>NLR1_CAEEL</name>
<comment type="function">
    <text evidence="7">Required for gap junction formation, playing a role in anchoring the cytoskeletal component F-actin to the membrane of adjacent cells and thus facilitating the formation of gap junction channels in embryonic cells, muscle cells and neuronal cells (PubMed:33238150). Plays a role in maintaining gap junction activity to promote pharyngeal muscle contraction (PubMed:33238150).</text>
</comment>
<comment type="subunit">
    <text evidence="7">Interacts (via the intracellular domain) with F-actin; the interaction is required for anchoring F-actin at the membrane for gap junction formation.</text>
</comment>
<comment type="subcellular location">
    <subcellularLocation>
        <location evidence="9">Cell membrane</location>
        <topology evidence="1">Single-pass type I membrane protein</topology>
    </subcellularLocation>
    <subcellularLocation>
        <location evidence="7">Cell junction</location>
        <location evidence="7">Gap junction</location>
    </subcellularLocation>
    <text evidence="7">Partially co-localizes with F-actin at gap junctions between EA and EP endodermal precursor cells in embryos.</text>
</comment>
<comment type="tissue specificity">
    <text evidence="6 7">Highly expressed in pharyngeal g1 and g2 gland cells, pharyngeal muscle cells and the unilateral GABAergic RIS interneuron (at protein level) (PubMed:21055481). Expressed in pm5 pharyngeal muscle cells and the nerve ring (PubMed:33238150).</text>
</comment>
<comment type="developmental stage">
    <text evidence="6 7">Expressed during all stages of larval development and adulthood (at protein level) (PubMed:21055481). Expressed during embryogenesis (PubMed:33238150). Expressed in EA and EP endodermal precursor cells at the 16-24 cell stage of embryogenesis (PubMed:33238150).</text>
</comment>
<comment type="disruption phenotype">
    <text evidence="7">RNAi-mediated knockdown results in abherrent inx-3-positive gap junction formation along the adjoining membranes of EA and EP endodermal precursor cells at the 16-24 cell stage of embryogenesis, and in adult pharyngeal muscles (PubMed:33238150). The inx-3-positive gap junctions are increased in number, are randomly positioned at irregular intervals on either the EA and EP cells and, although they are along the membrane, they are not on the membrane (PubMed:33238150). Furthermore, F-actin does not accumulate at the gap junction formation plaque in between the EA and EP adjoining membrane, but randomly forms patches along the membrane (PubMed:33238150). RNAi-mediated knockdown does not affect the expression of inx-3 (PubMed:33238150). RNAi-mediated knockdown impairs gap junction function in pharyngeal muscles which disrupts the synchronized muscle contraction between the pharyngeal metacorpus and terminal bulbs and thereby decreases the pharyngeal pumping rate (PubMed:33238150). RNAi-mediated knockdown in the nerve ring results in uncoordinated movements (also known as an unc phenotype), decreased locomotion and defective unc-9-positive gap junction formation and morphology (PubMed:33238150).</text>
</comment>
<comment type="similarity">
    <text evidence="8">Belongs to the neurexin family.</text>
</comment>
<accession>Q19617</accession>
<reference evidence="10" key="1">
    <citation type="journal article" date="1998" name="Science">
        <title>Genome sequence of the nematode C. elegans: a platform for investigating biology.</title>
        <authorList>
            <consortium name="The C. elegans sequencing consortium"/>
        </authorList>
    </citation>
    <scope>NUCLEOTIDE SEQUENCE [LARGE SCALE GENOMIC DNA]</scope>
    <source>
        <strain evidence="10">Bristol N2</strain>
    </source>
</reference>
<reference evidence="8" key="2">
    <citation type="journal article" date="2011" name="Gene Expr. Patterns">
        <title>The neurexin superfamily of Caenorhabditis elegans.</title>
        <authorList>
            <person name="Haklai-Topper L."/>
            <person name="Soutschek J."/>
            <person name="Sabanay H."/>
            <person name="Scheel J."/>
            <person name="Hobert O."/>
            <person name="Peles E."/>
        </authorList>
    </citation>
    <scope>TISSUE SPECIFICITY</scope>
    <scope>DEVELOPMENTAL STAGE</scope>
</reference>
<reference evidence="8" key="3">
    <citation type="journal article" date="2020" name="Dev. Cell">
        <title>NLR-1/CASPR Anchors F-Actin to Promote Gap Junction Formation.</title>
        <authorList>
            <person name="Meng L."/>
            <person name="Yan D."/>
        </authorList>
    </citation>
    <scope>FUNCTION</scope>
    <scope>INTERACTION WITH F-ACTIN</scope>
    <scope>SUBCELLULAR LOCATION</scope>
    <scope>TISSUE SPECIFICITY</scope>
    <scope>DEVELOPMENTAL STAGE</scope>
    <scope>DISRUPTION PHENOTYPE</scope>
</reference>
<organism evidence="10">
    <name type="scientific">Caenorhabditis elegans</name>
    <dbReference type="NCBI Taxonomy" id="6239"/>
    <lineage>
        <taxon>Eukaryota</taxon>
        <taxon>Metazoa</taxon>
        <taxon>Ecdysozoa</taxon>
        <taxon>Nematoda</taxon>
        <taxon>Chromadorea</taxon>
        <taxon>Rhabditida</taxon>
        <taxon>Rhabditina</taxon>
        <taxon>Rhabditomorpha</taxon>
        <taxon>Rhabditoidea</taxon>
        <taxon>Rhabditidae</taxon>
        <taxon>Peloderinae</taxon>
        <taxon>Caenorhabditis</taxon>
    </lineage>
</organism>
<proteinExistence type="evidence at protein level"/>
<gene>
    <name evidence="11" type="primary">nlr-1</name>
    <name evidence="11" type="ORF">F20B10.1</name>
</gene>
<dbReference type="EMBL" id="BX284604">
    <property type="protein sequence ID" value="CAA93465.2"/>
    <property type="molecule type" value="Genomic_DNA"/>
</dbReference>
<dbReference type="PIR" id="T21133">
    <property type="entry name" value="T21133"/>
</dbReference>
<dbReference type="RefSeq" id="NP_502312.2">
    <property type="nucleotide sequence ID" value="NM_069911.6"/>
</dbReference>
<dbReference type="SMR" id="Q19617"/>
<dbReference type="DIP" id="DIP-26832N"/>
<dbReference type="FunCoup" id="Q19617">
    <property type="interactions" value="1121"/>
</dbReference>
<dbReference type="STRING" id="6239.F20B10.1.1"/>
<dbReference type="GlyCosmos" id="Q19617">
    <property type="glycosylation" value="13 sites, No reported glycans"/>
</dbReference>
<dbReference type="PaxDb" id="6239-F20B10.1"/>
<dbReference type="EnsemblMetazoa" id="F20B10.1.1">
    <property type="protein sequence ID" value="F20B10.1.1"/>
    <property type="gene ID" value="WBGene00003772"/>
</dbReference>
<dbReference type="GeneID" id="178167"/>
<dbReference type="KEGG" id="cel:CELE_F20B10.1"/>
<dbReference type="UCSC" id="F20B10.1">
    <property type="organism name" value="c. elegans"/>
</dbReference>
<dbReference type="AGR" id="WB:WBGene00003772"/>
<dbReference type="CTD" id="178167"/>
<dbReference type="WormBase" id="F20B10.1">
    <property type="protein sequence ID" value="CE40647"/>
    <property type="gene ID" value="WBGene00003772"/>
    <property type="gene designation" value="nlr-1"/>
</dbReference>
<dbReference type="eggNOG" id="KOG3516">
    <property type="taxonomic scope" value="Eukaryota"/>
</dbReference>
<dbReference type="GeneTree" id="ENSGT00940000160532"/>
<dbReference type="HOGENOM" id="CLU_273234_0_0_1"/>
<dbReference type="InParanoid" id="Q19617"/>
<dbReference type="OMA" id="KNCHTTD"/>
<dbReference type="OrthoDB" id="26719at2759"/>
<dbReference type="PhylomeDB" id="Q19617"/>
<dbReference type="PRO" id="PR:Q19617"/>
<dbReference type="Proteomes" id="UP000001940">
    <property type="component" value="Chromosome IV"/>
</dbReference>
<dbReference type="Bgee" id="WBGene00003772">
    <property type="expression patterns" value="Expressed in pharyngeal muscle cell (C elegans) and 3 other cell types or tissues"/>
</dbReference>
<dbReference type="GO" id="GO:0005921">
    <property type="term" value="C:gap junction"/>
    <property type="evidence" value="ECO:0000314"/>
    <property type="project" value="UniProtKB"/>
</dbReference>
<dbReference type="GO" id="GO:0005886">
    <property type="term" value="C:plasma membrane"/>
    <property type="evidence" value="ECO:0007669"/>
    <property type="project" value="UniProtKB-SubCell"/>
</dbReference>
<dbReference type="GO" id="GO:0051015">
    <property type="term" value="F:actin filament binding"/>
    <property type="evidence" value="ECO:0000314"/>
    <property type="project" value="UniProtKB"/>
</dbReference>
<dbReference type="GO" id="GO:0005509">
    <property type="term" value="F:calcium ion binding"/>
    <property type="evidence" value="ECO:0007669"/>
    <property type="project" value="InterPro"/>
</dbReference>
<dbReference type="GO" id="GO:0005243">
    <property type="term" value="F:gap junction channel activity"/>
    <property type="evidence" value="ECO:0000315"/>
    <property type="project" value="UniProtKB"/>
</dbReference>
<dbReference type="GO" id="GO:1903598">
    <property type="term" value="P:positive regulation of gap junction assembly"/>
    <property type="evidence" value="ECO:0000315"/>
    <property type="project" value="UniProtKB"/>
</dbReference>
<dbReference type="GO" id="GO:1903746">
    <property type="term" value="P:positive regulation of nematode pharyngeal pumping"/>
    <property type="evidence" value="ECO:0000315"/>
    <property type="project" value="UniProtKB"/>
</dbReference>
<dbReference type="CDD" id="cd00054">
    <property type="entry name" value="EGF_CA"/>
    <property type="match status" value="2"/>
</dbReference>
<dbReference type="CDD" id="cd00110">
    <property type="entry name" value="LamG"/>
    <property type="match status" value="2"/>
</dbReference>
<dbReference type="FunFam" id="2.10.25.10:FF:000255">
    <property type="entry name" value="Sushi, nidogen and EGF-like domains 1"/>
    <property type="match status" value="1"/>
</dbReference>
<dbReference type="Gene3D" id="2.60.120.200">
    <property type="match status" value="3"/>
</dbReference>
<dbReference type="Gene3D" id="2.10.25.10">
    <property type="entry name" value="Laminin"/>
    <property type="match status" value="2"/>
</dbReference>
<dbReference type="InterPro" id="IPR013320">
    <property type="entry name" value="ConA-like_dom_sf"/>
</dbReference>
<dbReference type="InterPro" id="IPR001881">
    <property type="entry name" value="EGF-like_Ca-bd_dom"/>
</dbReference>
<dbReference type="InterPro" id="IPR000742">
    <property type="entry name" value="EGF-like_dom"/>
</dbReference>
<dbReference type="InterPro" id="IPR000152">
    <property type="entry name" value="EGF-type_Asp/Asn_hydroxyl_site"/>
</dbReference>
<dbReference type="InterPro" id="IPR001791">
    <property type="entry name" value="Laminin_G"/>
</dbReference>
<dbReference type="InterPro" id="IPR050372">
    <property type="entry name" value="Neurexin-related_CASP"/>
</dbReference>
<dbReference type="PANTHER" id="PTHR15036:SF49">
    <property type="entry name" value="AXOTACTIN"/>
    <property type="match status" value="1"/>
</dbReference>
<dbReference type="PANTHER" id="PTHR15036">
    <property type="entry name" value="PIKACHURIN-LIKE PROTEIN"/>
    <property type="match status" value="1"/>
</dbReference>
<dbReference type="Pfam" id="PF00008">
    <property type="entry name" value="EGF"/>
    <property type="match status" value="1"/>
</dbReference>
<dbReference type="Pfam" id="PF02210">
    <property type="entry name" value="Laminin_G_2"/>
    <property type="match status" value="2"/>
</dbReference>
<dbReference type="SMART" id="SM00181">
    <property type="entry name" value="EGF"/>
    <property type="match status" value="2"/>
</dbReference>
<dbReference type="SMART" id="SM00179">
    <property type="entry name" value="EGF_CA"/>
    <property type="match status" value="2"/>
</dbReference>
<dbReference type="SMART" id="SM00282">
    <property type="entry name" value="LamG"/>
    <property type="match status" value="2"/>
</dbReference>
<dbReference type="SUPFAM" id="SSF49899">
    <property type="entry name" value="Concanavalin A-like lectins/glucanases"/>
    <property type="match status" value="4"/>
</dbReference>
<dbReference type="PROSITE" id="PS00010">
    <property type="entry name" value="ASX_HYDROXYL"/>
    <property type="match status" value="1"/>
</dbReference>
<dbReference type="PROSITE" id="PS00022">
    <property type="entry name" value="EGF_1"/>
    <property type="match status" value="1"/>
</dbReference>
<dbReference type="PROSITE" id="PS01186">
    <property type="entry name" value="EGF_2"/>
    <property type="match status" value="1"/>
</dbReference>
<dbReference type="PROSITE" id="PS50026">
    <property type="entry name" value="EGF_3"/>
    <property type="match status" value="2"/>
</dbReference>
<dbReference type="PROSITE" id="PS50025">
    <property type="entry name" value="LAM_G_DOMAIN"/>
    <property type="match status" value="2"/>
</dbReference>
<keyword id="KW-0965">Cell junction</keyword>
<keyword id="KW-1003">Cell membrane</keyword>
<keyword id="KW-1015">Disulfide bond</keyword>
<keyword id="KW-0245">EGF-like domain</keyword>
<keyword id="KW-0303">Gap junction</keyword>
<keyword id="KW-0325">Glycoprotein</keyword>
<keyword id="KW-0472">Membrane</keyword>
<keyword id="KW-0675">Receptor</keyword>
<keyword id="KW-1185">Reference proteome</keyword>
<keyword id="KW-0677">Repeat</keyword>
<keyword id="KW-0732">Signal</keyword>
<keyword id="KW-0812">Transmembrane</keyword>
<keyword id="KW-1133">Transmembrane helix</keyword>
<sequence>MSGLCLVLLLSIFAVSQSSGECSDVSFSSVASKLDGLKRVTRLSVSGHISAYHVKVSISDDDFQLVRLSNGNPLVLYSTLSNTPSWTHVDFLATEVRIFPAFEQATEDVRGPLLILTICDYDTPITAFDDSSYTVEAHHAGLVSMYENDLCVVFRTYRSGVFFFSMADQGDVLIAQIIHGTVHVIFDFGSLTPSRISAGKALDDGRWHEMRWLHQFDSVQLSIDGVLLNQTAPTGLYRKLDLHSVVHIGGRPNDDFSQGIETTFTGCIARLQLNNADLLQLSPNEVHNQCQMPKPPSFTLHNSSRAVLPFTFLPFSFEFRIVPINGPLVTLFDAENGTLVDVVIDEESKLHLVSNITKFKQAANPAIDVADGAWHSFSLRIRGVRMEIDIDGYTVLWLEGHEVRRVSQRLSNFILSASGCYRSVTIDLTSVRVDGNVTRGECTFQEKCLPNPCENGGGCVQSALDDYVCNCKEGYKGKNCHTTDLPHSCEEWVFTKGNKQKAVQGRKVLIDIDGGGEMQPINVTCKTERDEIGIDGVSTILEHDLLRPMIVTGDNKPGAVRYSLTYGISTEQMDRLVEGFEACSQFMRYTCRGGARLMTQGDERSPSSWYSTRSDKHGLQWGEAPPYSRMCSCAINGSCLHNRMCNCDSGEDSTDEGVNPYSQLLPVTGLFLGGTTKSSSIEVEIGPLKCRNRATFDPVTFSNRNAKLSGAQTFNQRTFDVSLHVKFSHSQMSILSWHSTDDLHWFHLYVNDGKIVGEVVNGGESQQIVSEHRYDDGKFHAIYWEADSTGMFLKVDGQRKSVKTSFILPTVYMWIVGSRTEKGSTGFAGVIRNVHLCGVELALGQYARKETERGVAIGDDGYCRPDLCQNGGQCVDKYDGYVCDCSMTPFGGSDCTKEYGMMVPAGSSIQIPWQNPAHQAMCHRIAIQTTSRNTTILRSKALFADSTFNMTVDDNGNLQMMAYDGFFFHFKRQSKRHNLSDDIMHDISFCASKHHFNVSVDGMQVITIEGNWTFFESFNVWHFLDENFEGCVSRIQTGSAFPLKNPKTARLNYSGKIRFGTCPIEAVSRQQMYDFNPQPDLISSTIKTSTEDIKIFSVSQNKQDLVSKAIIGGGILALSLFILCMSSLICYMRSRPEGVYKTNETGENCSPSRSEEPLVHNTTSNNNNNPTYASNKEYFC</sequence>